<feature type="chain" id="PRO_0000272459" description="Phosphate import ATP-binding protein PstB">
    <location>
        <begin position="1"/>
        <end position="255"/>
    </location>
</feature>
<feature type="domain" description="ABC transporter" evidence="1">
    <location>
        <begin position="9"/>
        <end position="250"/>
    </location>
</feature>
<feature type="binding site" evidence="1">
    <location>
        <begin position="41"/>
        <end position="48"/>
    </location>
    <ligand>
        <name>ATP</name>
        <dbReference type="ChEBI" id="CHEBI:30616"/>
    </ligand>
</feature>
<accession>Q4QK92</accession>
<gene>
    <name evidence="1" type="primary">pstB</name>
    <name type="ordered locus">NTHI1777</name>
</gene>
<proteinExistence type="inferred from homology"/>
<reference key="1">
    <citation type="journal article" date="2005" name="J. Bacteriol.">
        <title>Genomic sequence of an otitis media isolate of nontypeable Haemophilus influenzae: comparative study with H. influenzae serotype d, strain KW20.</title>
        <authorList>
            <person name="Harrison A."/>
            <person name="Dyer D.W."/>
            <person name="Gillaspy A."/>
            <person name="Ray W.C."/>
            <person name="Mungur R."/>
            <person name="Carson M.B."/>
            <person name="Zhong H."/>
            <person name="Gipson J."/>
            <person name="Gipson M."/>
            <person name="Johnson L.S."/>
            <person name="Lewis L."/>
            <person name="Bakaletz L.O."/>
            <person name="Munson R.S. Jr."/>
        </authorList>
    </citation>
    <scope>NUCLEOTIDE SEQUENCE [LARGE SCALE GENOMIC DNA]</scope>
    <source>
        <strain>86-028NP</strain>
    </source>
</reference>
<protein>
    <recommendedName>
        <fullName evidence="1">Phosphate import ATP-binding protein PstB</fullName>
        <ecNumber evidence="1">7.3.2.1</ecNumber>
    </recommendedName>
    <alternativeName>
        <fullName evidence="1">ABC phosphate transporter</fullName>
    </alternativeName>
    <alternativeName>
        <fullName evidence="1">Phosphate-transporting ATPase</fullName>
    </alternativeName>
</protein>
<organism>
    <name type="scientific">Haemophilus influenzae (strain 86-028NP)</name>
    <dbReference type="NCBI Taxonomy" id="281310"/>
    <lineage>
        <taxon>Bacteria</taxon>
        <taxon>Pseudomonadati</taxon>
        <taxon>Pseudomonadota</taxon>
        <taxon>Gammaproteobacteria</taxon>
        <taxon>Pasteurellales</taxon>
        <taxon>Pasteurellaceae</taxon>
        <taxon>Haemophilus</taxon>
    </lineage>
</organism>
<dbReference type="EC" id="7.3.2.1" evidence="1"/>
<dbReference type="EMBL" id="CP000057">
    <property type="protein sequence ID" value="AAX88555.1"/>
    <property type="molecule type" value="Genomic_DNA"/>
</dbReference>
<dbReference type="RefSeq" id="WP_005650603.1">
    <property type="nucleotide sequence ID" value="NC_007146.2"/>
</dbReference>
<dbReference type="SMR" id="Q4QK92"/>
<dbReference type="GeneID" id="93220495"/>
<dbReference type="KEGG" id="hit:NTHI1777"/>
<dbReference type="HOGENOM" id="CLU_000604_1_22_6"/>
<dbReference type="Proteomes" id="UP000002525">
    <property type="component" value="Chromosome"/>
</dbReference>
<dbReference type="GO" id="GO:0005886">
    <property type="term" value="C:plasma membrane"/>
    <property type="evidence" value="ECO:0007669"/>
    <property type="project" value="UniProtKB-SubCell"/>
</dbReference>
<dbReference type="GO" id="GO:0005524">
    <property type="term" value="F:ATP binding"/>
    <property type="evidence" value="ECO:0007669"/>
    <property type="project" value="UniProtKB-KW"/>
</dbReference>
<dbReference type="GO" id="GO:0016887">
    <property type="term" value="F:ATP hydrolysis activity"/>
    <property type="evidence" value="ECO:0007669"/>
    <property type="project" value="InterPro"/>
</dbReference>
<dbReference type="GO" id="GO:0015415">
    <property type="term" value="F:ATPase-coupled phosphate ion transmembrane transporter activity"/>
    <property type="evidence" value="ECO:0007669"/>
    <property type="project" value="UniProtKB-EC"/>
</dbReference>
<dbReference type="GO" id="GO:0035435">
    <property type="term" value="P:phosphate ion transmembrane transport"/>
    <property type="evidence" value="ECO:0007669"/>
    <property type="project" value="InterPro"/>
</dbReference>
<dbReference type="CDD" id="cd03260">
    <property type="entry name" value="ABC_PstB_phosphate_transporter"/>
    <property type="match status" value="1"/>
</dbReference>
<dbReference type="FunFam" id="3.40.50.300:FF:000132">
    <property type="entry name" value="Phosphate import ATP-binding protein PstB"/>
    <property type="match status" value="1"/>
</dbReference>
<dbReference type="Gene3D" id="3.40.50.300">
    <property type="entry name" value="P-loop containing nucleotide triphosphate hydrolases"/>
    <property type="match status" value="1"/>
</dbReference>
<dbReference type="InterPro" id="IPR003593">
    <property type="entry name" value="AAA+_ATPase"/>
</dbReference>
<dbReference type="InterPro" id="IPR003439">
    <property type="entry name" value="ABC_transporter-like_ATP-bd"/>
</dbReference>
<dbReference type="InterPro" id="IPR017871">
    <property type="entry name" value="ABC_transporter-like_CS"/>
</dbReference>
<dbReference type="InterPro" id="IPR027417">
    <property type="entry name" value="P-loop_NTPase"/>
</dbReference>
<dbReference type="InterPro" id="IPR005670">
    <property type="entry name" value="PstB-like"/>
</dbReference>
<dbReference type="NCBIfam" id="TIGR00972">
    <property type="entry name" value="3a0107s01c2"/>
    <property type="match status" value="1"/>
</dbReference>
<dbReference type="PANTHER" id="PTHR43423">
    <property type="entry name" value="ABC TRANSPORTER I FAMILY MEMBER 17"/>
    <property type="match status" value="1"/>
</dbReference>
<dbReference type="PANTHER" id="PTHR43423:SF3">
    <property type="entry name" value="PHOSPHATE IMPORT ATP-BINDING PROTEIN PSTB"/>
    <property type="match status" value="1"/>
</dbReference>
<dbReference type="Pfam" id="PF00005">
    <property type="entry name" value="ABC_tran"/>
    <property type="match status" value="1"/>
</dbReference>
<dbReference type="SMART" id="SM00382">
    <property type="entry name" value="AAA"/>
    <property type="match status" value="1"/>
</dbReference>
<dbReference type="SUPFAM" id="SSF52540">
    <property type="entry name" value="P-loop containing nucleoside triphosphate hydrolases"/>
    <property type="match status" value="1"/>
</dbReference>
<dbReference type="PROSITE" id="PS00211">
    <property type="entry name" value="ABC_TRANSPORTER_1"/>
    <property type="match status" value="1"/>
</dbReference>
<dbReference type="PROSITE" id="PS50893">
    <property type="entry name" value="ABC_TRANSPORTER_2"/>
    <property type="match status" value="1"/>
</dbReference>
<dbReference type="PROSITE" id="PS51238">
    <property type="entry name" value="PSTB"/>
    <property type="match status" value="1"/>
</dbReference>
<comment type="function">
    <text evidence="1">Part of the ABC transporter complex PstSACB involved in phosphate import. Responsible for energy coupling to the transport system.</text>
</comment>
<comment type="catalytic activity">
    <reaction evidence="1">
        <text>phosphate(out) + ATP + H2O = ADP + 2 phosphate(in) + H(+)</text>
        <dbReference type="Rhea" id="RHEA:24440"/>
        <dbReference type="ChEBI" id="CHEBI:15377"/>
        <dbReference type="ChEBI" id="CHEBI:15378"/>
        <dbReference type="ChEBI" id="CHEBI:30616"/>
        <dbReference type="ChEBI" id="CHEBI:43474"/>
        <dbReference type="ChEBI" id="CHEBI:456216"/>
        <dbReference type="EC" id="7.3.2.1"/>
    </reaction>
</comment>
<comment type="subunit">
    <text evidence="1">The complex is composed of two ATP-binding proteins (PstB), two transmembrane proteins (PstC and PstA) and a solute-binding protein (PstS).</text>
</comment>
<comment type="subcellular location">
    <subcellularLocation>
        <location evidence="1">Cell inner membrane</location>
        <topology evidence="1">Peripheral membrane protein</topology>
    </subcellularLocation>
</comment>
<comment type="similarity">
    <text evidence="1">Belongs to the ABC transporter superfamily. Phosphate importer (TC 3.A.1.7) family.</text>
</comment>
<keyword id="KW-0067">ATP-binding</keyword>
<keyword id="KW-0997">Cell inner membrane</keyword>
<keyword id="KW-1003">Cell membrane</keyword>
<keyword id="KW-0472">Membrane</keyword>
<keyword id="KW-0547">Nucleotide-binding</keyword>
<keyword id="KW-0592">Phosphate transport</keyword>
<keyword id="KW-1278">Translocase</keyword>
<keyword id="KW-0813">Transport</keyword>
<evidence type="ECO:0000255" key="1">
    <source>
        <dbReference type="HAMAP-Rule" id="MF_01702"/>
    </source>
</evidence>
<sequence length="255" mass="29045">MISLQETKIAVQNLNFYYEDFHALKNINLRIAKNKVTAFIGPSGCGKSTLLRSFNRMFELYPNQKATGEINLDGENLLTTKMDISLIRAKVGMVFQKPTPFPMSIYDNIAFGVRLFEKLSKEKMNERVEWALTKAALWNEVKDKLHKSGDSLSGGQQQRLCIARGIAIKPSVLLLDEPCSALDPISTMKIEELITELKQDYTVVIVTHNMQQATRCSDYTAFMYLGELVEFGQTQQIFDRPKIQRTEDYIRGKMG</sequence>
<name>PSTB_HAEI8</name>